<protein>
    <recommendedName>
        <fullName evidence="1">Orotidine 5'-phosphate decarboxylase</fullName>
        <ecNumber evidence="1">4.1.1.23</ecNumber>
    </recommendedName>
    <alternativeName>
        <fullName evidence="1">OMP decarboxylase</fullName>
        <shortName evidence="1">OMPDCase</shortName>
        <shortName evidence="1">OMPdecase</shortName>
    </alternativeName>
</protein>
<evidence type="ECO:0000255" key="1">
    <source>
        <dbReference type="HAMAP-Rule" id="MF_01215"/>
    </source>
</evidence>
<sequence length="274" mass="29148">MTFLDKLATAQQTNGSLLCVGLDPEPAKFPGQLKGDASRIYDFCARIVDATAGLVIAFKPQIAYFAAHRAEAQLEQLMEHMRRNAPGVPVILDAKRGDIGSTAEQYAIEAFERYGADAVTLSPFMGFDSVAPYLKHQGKGAFLLCRTSNPGGSDLQGQRLAGIEGQPFLYEHVARLAQGPWNLNGQLGLVVGATYPAEIERVRELAPTVPLLIPGVGAQGGDAVATVRAGWRPDAPIIVNSSRAIIYASSGDDFAEAAQKAARSTRDALEAAKP</sequence>
<feature type="chain" id="PRO_1000213896" description="Orotidine 5'-phosphate decarboxylase">
    <location>
        <begin position="1"/>
        <end position="274"/>
    </location>
</feature>
<feature type="active site" description="Proton donor" evidence="1">
    <location>
        <position position="95"/>
    </location>
</feature>
<accession>C5CQB2</accession>
<proteinExistence type="inferred from homology"/>
<organism>
    <name type="scientific">Variovorax paradoxus (strain S110)</name>
    <dbReference type="NCBI Taxonomy" id="543728"/>
    <lineage>
        <taxon>Bacteria</taxon>
        <taxon>Pseudomonadati</taxon>
        <taxon>Pseudomonadota</taxon>
        <taxon>Betaproteobacteria</taxon>
        <taxon>Burkholderiales</taxon>
        <taxon>Comamonadaceae</taxon>
        <taxon>Variovorax</taxon>
    </lineage>
</organism>
<comment type="catalytic activity">
    <reaction evidence="1">
        <text>orotidine 5'-phosphate + H(+) = UMP + CO2</text>
        <dbReference type="Rhea" id="RHEA:11596"/>
        <dbReference type="ChEBI" id="CHEBI:15378"/>
        <dbReference type="ChEBI" id="CHEBI:16526"/>
        <dbReference type="ChEBI" id="CHEBI:57538"/>
        <dbReference type="ChEBI" id="CHEBI:57865"/>
        <dbReference type="EC" id="4.1.1.23"/>
    </reaction>
</comment>
<comment type="pathway">
    <text evidence="1">Pyrimidine metabolism; UMP biosynthesis via de novo pathway; UMP from orotate: step 2/2.</text>
</comment>
<comment type="similarity">
    <text evidence="1">Belongs to the OMP decarboxylase family. Type 2 subfamily.</text>
</comment>
<dbReference type="EC" id="4.1.1.23" evidence="1"/>
<dbReference type="EMBL" id="CP001635">
    <property type="protein sequence ID" value="ACS21684.1"/>
    <property type="molecule type" value="Genomic_DNA"/>
</dbReference>
<dbReference type="SMR" id="C5CQB2"/>
<dbReference type="STRING" id="543728.Vapar_5082"/>
<dbReference type="KEGG" id="vap:Vapar_5082"/>
<dbReference type="eggNOG" id="COG0284">
    <property type="taxonomic scope" value="Bacteria"/>
</dbReference>
<dbReference type="HOGENOM" id="CLU_060704_1_0_4"/>
<dbReference type="OrthoDB" id="9808470at2"/>
<dbReference type="UniPathway" id="UPA00070">
    <property type="reaction ID" value="UER00120"/>
</dbReference>
<dbReference type="GO" id="GO:0004590">
    <property type="term" value="F:orotidine-5'-phosphate decarboxylase activity"/>
    <property type="evidence" value="ECO:0007669"/>
    <property type="project" value="UniProtKB-UniRule"/>
</dbReference>
<dbReference type="GO" id="GO:0006207">
    <property type="term" value="P:'de novo' pyrimidine nucleobase biosynthetic process"/>
    <property type="evidence" value="ECO:0007669"/>
    <property type="project" value="InterPro"/>
</dbReference>
<dbReference type="GO" id="GO:0044205">
    <property type="term" value="P:'de novo' UMP biosynthetic process"/>
    <property type="evidence" value="ECO:0007669"/>
    <property type="project" value="UniProtKB-UniRule"/>
</dbReference>
<dbReference type="CDD" id="cd04725">
    <property type="entry name" value="OMP_decarboxylase_like"/>
    <property type="match status" value="1"/>
</dbReference>
<dbReference type="Gene3D" id="3.20.20.70">
    <property type="entry name" value="Aldolase class I"/>
    <property type="match status" value="1"/>
</dbReference>
<dbReference type="HAMAP" id="MF_01215">
    <property type="entry name" value="OMPdecase_type2"/>
    <property type="match status" value="1"/>
</dbReference>
<dbReference type="InterPro" id="IPR013785">
    <property type="entry name" value="Aldolase_TIM"/>
</dbReference>
<dbReference type="InterPro" id="IPR018089">
    <property type="entry name" value="OMPdecase_AS"/>
</dbReference>
<dbReference type="InterPro" id="IPR011995">
    <property type="entry name" value="OMPdecase_type-2"/>
</dbReference>
<dbReference type="InterPro" id="IPR001754">
    <property type="entry name" value="OMPdeCOase_dom"/>
</dbReference>
<dbReference type="InterPro" id="IPR011060">
    <property type="entry name" value="RibuloseP-bd_barrel"/>
</dbReference>
<dbReference type="NCBIfam" id="TIGR02127">
    <property type="entry name" value="pyrF_sub2"/>
    <property type="match status" value="1"/>
</dbReference>
<dbReference type="PANTHER" id="PTHR43375">
    <property type="entry name" value="OROTIDINE 5'-PHOSPHATE DECARBOXYLASE"/>
    <property type="match status" value="1"/>
</dbReference>
<dbReference type="PANTHER" id="PTHR43375:SF1">
    <property type="entry name" value="OROTIDINE 5'-PHOSPHATE DECARBOXYLASE"/>
    <property type="match status" value="1"/>
</dbReference>
<dbReference type="Pfam" id="PF00215">
    <property type="entry name" value="OMPdecase"/>
    <property type="match status" value="1"/>
</dbReference>
<dbReference type="SMART" id="SM00934">
    <property type="entry name" value="OMPdecase"/>
    <property type="match status" value="1"/>
</dbReference>
<dbReference type="SUPFAM" id="SSF51366">
    <property type="entry name" value="Ribulose-phoshate binding barrel"/>
    <property type="match status" value="1"/>
</dbReference>
<dbReference type="PROSITE" id="PS00156">
    <property type="entry name" value="OMPDECASE"/>
    <property type="match status" value="1"/>
</dbReference>
<keyword id="KW-0210">Decarboxylase</keyword>
<keyword id="KW-0456">Lyase</keyword>
<keyword id="KW-0665">Pyrimidine biosynthesis</keyword>
<name>PYRF_VARPS</name>
<reference key="1">
    <citation type="journal article" date="2011" name="J. Bacteriol.">
        <title>Complete genome sequence of the metabolically versatile plant growth-promoting endophyte, Variovorax paradoxus S110.</title>
        <authorList>
            <person name="Han J.I."/>
            <person name="Choi H.K."/>
            <person name="Lee S.W."/>
            <person name="Orwin P.M."/>
            <person name="Kim J."/>
            <person name="Laroe S.L."/>
            <person name="Kim T.G."/>
            <person name="O'Neil J."/>
            <person name="Leadbetter J.R."/>
            <person name="Lee S.Y."/>
            <person name="Hur C.G."/>
            <person name="Spain J.C."/>
            <person name="Ovchinnikova G."/>
            <person name="Goodwin L."/>
            <person name="Han C."/>
        </authorList>
    </citation>
    <scope>NUCLEOTIDE SEQUENCE [LARGE SCALE GENOMIC DNA]</scope>
    <source>
        <strain>S110</strain>
    </source>
</reference>
<gene>
    <name evidence="1" type="primary">pyrF</name>
    <name type="ordered locus">Vapar_5082</name>
</gene>